<evidence type="ECO:0000250" key="1"/>
<evidence type="ECO:0000255" key="2">
    <source>
        <dbReference type="PROSITE-ProRule" id="PRU00396"/>
    </source>
</evidence>
<evidence type="ECO:0000256" key="3">
    <source>
        <dbReference type="SAM" id="MobiDB-lite"/>
    </source>
</evidence>
<evidence type="ECO:0000269" key="4">
    <source>
    </source>
</evidence>
<evidence type="ECO:0000305" key="5"/>
<gene>
    <name type="primary">Sertad1</name>
    <name type="synonym">Sei1</name>
</gene>
<accession>Q9JL10</accession>
<accession>Q925E6</accession>
<accession>Q9D888</accession>
<protein>
    <recommendedName>
        <fullName>SERTA domain-containing protein 1</fullName>
    </recommendedName>
    <alternativeName>
        <fullName>CDK4-binding protein p34SEI1</fullName>
        <shortName>SEI-1</shortName>
    </alternativeName>
    <alternativeName>
        <fullName>Transcriptional regulator interacting with the PHD-bromodomain 1</fullName>
        <shortName>TRIP-Br1</shortName>
    </alternativeName>
</protein>
<proteinExistence type="evidence at protein level"/>
<dbReference type="EMBL" id="AF218291">
    <property type="protein sequence ID" value="AAF27653.1"/>
    <property type="molecule type" value="mRNA"/>
</dbReference>
<dbReference type="EMBL" id="AF366400">
    <property type="protein sequence ID" value="AAK52829.1"/>
    <property type="molecule type" value="mRNA"/>
</dbReference>
<dbReference type="EMBL" id="AF366401">
    <property type="protein sequence ID" value="AAK52830.1"/>
    <property type="molecule type" value="mRNA"/>
</dbReference>
<dbReference type="EMBL" id="AK004022">
    <property type="protein sequence ID" value="BAB23130.1"/>
    <property type="molecule type" value="mRNA"/>
</dbReference>
<dbReference type="EMBL" id="AK008303">
    <property type="protein sequence ID" value="BAB25588.1"/>
    <property type="molecule type" value="mRNA"/>
</dbReference>
<dbReference type="EMBL" id="BC016077">
    <property type="protein sequence ID" value="AAH16077.1"/>
    <property type="molecule type" value="mRNA"/>
</dbReference>
<dbReference type="CCDS" id="CCDS21022.1"/>
<dbReference type="RefSeq" id="NP_001405448.1">
    <property type="nucleotide sequence ID" value="NM_001418519.1"/>
</dbReference>
<dbReference type="RefSeq" id="NP_061290.1">
    <property type="nucleotide sequence ID" value="NM_018820.5"/>
</dbReference>
<dbReference type="RefSeq" id="XP_006540280.1">
    <property type="nucleotide sequence ID" value="XM_006540217.3"/>
</dbReference>
<dbReference type="BioGRID" id="207738">
    <property type="interactions" value="12"/>
</dbReference>
<dbReference type="CORUM" id="Q9JL10"/>
<dbReference type="FunCoup" id="Q9JL10">
    <property type="interactions" value="575"/>
</dbReference>
<dbReference type="IntAct" id="Q9JL10">
    <property type="interactions" value="7"/>
</dbReference>
<dbReference type="STRING" id="10090.ENSMUSP00000008528"/>
<dbReference type="PaxDb" id="10090-ENSMUSP00000008528"/>
<dbReference type="Antibodypedia" id="16970">
    <property type="antibodies" value="191 antibodies from 31 providers"/>
</dbReference>
<dbReference type="DNASU" id="55942"/>
<dbReference type="Ensembl" id="ENSMUST00000008528.8">
    <property type="protein sequence ID" value="ENSMUSP00000008528.8"/>
    <property type="gene ID" value="ENSMUSG00000008384.9"/>
</dbReference>
<dbReference type="GeneID" id="55942"/>
<dbReference type="KEGG" id="mmu:55942"/>
<dbReference type="UCSC" id="uc009fwh.1">
    <property type="organism name" value="mouse"/>
</dbReference>
<dbReference type="AGR" id="MGI:1913438"/>
<dbReference type="CTD" id="29950"/>
<dbReference type="MGI" id="MGI:1913438">
    <property type="gene designation" value="Sertad1"/>
</dbReference>
<dbReference type="VEuPathDB" id="HostDB:ENSMUSG00000008384"/>
<dbReference type="eggNOG" id="ENOG502S52T">
    <property type="taxonomic scope" value="Eukaryota"/>
</dbReference>
<dbReference type="GeneTree" id="ENSGT00940000154733"/>
<dbReference type="HOGENOM" id="CLU_1229598_0_0_1"/>
<dbReference type="InParanoid" id="Q9JL10"/>
<dbReference type="OMA" id="LAVDTWW"/>
<dbReference type="OrthoDB" id="6083860at2759"/>
<dbReference type="PhylomeDB" id="Q9JL10"/>
<dbReference type="TreeFam" id="TF101069"/>
<dbReference type="BioGRID-ORCS" id="55942">
    <property type="hits" value="4 hits in 76 CRISPR screens"/>
</dbReference>
<dbReference type="PRO" id="PR:Q9JL10"/>
<dbReference type="Proteomes" id="UP000000589">
    <property type="component" value="Chromosome 7"/>
</dbReference>
<dbReference type="RNAct" id="Q9JL10">
    <property type="molecule type" value="protein"/>
</dbReference>
<dbReference type="Bgee" id="ENSMUSG00000008384">
    <property type="expression patterns" value="Expressed in granulocyte and 247 other cell types or tissues"/>
</dbReference>
<dbReference type="ExpressionAtlas" id="Q9JL10">
    <property type="expression patterns" value="baseline and differential"/>
</dbReference>
<dbReference type="GO" id="GO:0005737">
    <property type="term" value="C:cytoplasm"/>
    <property type="evidence" value="ECO:0000266"/>
    <property type="project" value="MGI"/>
</dbReference>
<dbReference type="GO" id="GO:0005634">
    <property type="term" value="C:nucleus"/>
    <property type="evidence" value="ECO:0000314"/>
    <property type="project" value="MGI"/>
</dbReference>
<dbReference type="GO" id="GO:0016528">
    <property type="term" value="C:sarcoplasm"/>
    <property type="evidence" value="ECO:0000314"/>
    <property type="project" value="MGI"/>
</dbReference>
<dbReference type="GO" id="GO:0030308">
    <property type="term" value="P:negative regulation of cell growth"/>
    <property type="evidence" value="ECO:0000266"/>
    <property type="project" value="MGI"/>
</dbReference>
<dbReference type="GO" id="GO:0045893">
    <property type="term" value="P:positive regulation of DNA-templated transcription"/>
    <property type="evidence" value="ECO:0000314"/>
    <property type="project" value="MGI"/>
</dbReference>
<dbReference type="GO" id="GO:0045944">
    <property type="term" value="P:positive regulation of transcription by RNA polymerase II"/>
    <property type="evidence" value="ECO:0000316"/>
    <property type="project" value="MGI"/>
</dbReference>
<dbReference type="InterPro" id="IPR052262">
    <property type="entry name" value="E2F-SERTA_domain_protein"/>
</dbReference>
<dbReference type="InterPro" id="IPR009263">
    <property type="entry name" value="SERTA_dom"/>
</dbReference>
<dbReference type="PANTHER" id="PTHR16277">
    <property type="entry name" value="CELL DIVISION CYCLE ASSOCIATED PROTEIN 4/SERTA DOMAIN-CONTAINING PROTEIN 2"/>
    <property type="match status" value="1"/>
</dbReference>
<dbReference type="PANTHER" id="PTHR16277:SF12">
    <property type="entry name" value="SERTA DOMAIN-CONTAINING PROTEIN 1"/>
    <property type="match status" value="1"/>
</dbReference>
<dbReference type="Pfam" id="PF06031">
    <property type="entry name" value="SERTA"/>
    <property type="match status" value="1"/>
</dbReference>
<dbReference type="PROSITE" id="PS51053">
    <property type="entry name" value="SERTA"/>
    <property type="match status" value="1"/>
</dbReference>
<comment type="function">
    <text evidence="4">Acts at E2F-responsive promoters as coregulator to integrate signals provided by PHD- and/or bromodomain-containing transcription factors. Stimulates E2F1/TFDP1 transcriptional activity. Renders the activity of cyclin D1/CDK4 resistant to the inhibitory effects of CDKN2A/p16INK4A.</text>
</comment>
<comment type="subunit">
    <text evidence="4">Interacts with the PHD-bromodomain of TIF1, TRIM28/TIF1B and p300/CBP. Interacts with E2F1 and TFDP1; modulates transactivation activity of TFDP1/E2F complexes. Also interacts with CDK4.</text>
</comment>
<comment type="tissue specificity">
    <text evidence="4">Detected at in testis, lung and, at lower levels, in muscle, liver, spleen, brain and heart.</text>
</comment>
<comment type="developmental stage">
    <text evidence="4">Detected as early as 7 dpc and persist until, at least, 17 dpc.</text>
</comment>
<comment type="PTM">
    <text evidence="1">Polyubiquitinated, which promotes proteasomal degradation.</text>
</comment>
<reference key="1">
    <citation type="submission" date="1999-12" db="EMBL/GenBank/DDBJ databases">
        <title>Cloning of mouse SEI-1 cDNA.</title>
        <authorList>
            <person name="Ohtani N."/>
            <person name="Hara E."/>
        </authorList>
    </citation>
    <scope>NUCLEOTIDE SEQUENCE [MRNA]</scope>
</reference>
<reference key="2">
    <citation type="journal article" date="2001" name="EMBO J.">
        <title>TRIP-Br: a novel family of PHD zinc finger- and bromodomain-interacting proteins that regulate the transcriptional activity of E2F-1/DP-1.</title>
        <authorList>
            <person name="Hsu S.-I."/>
            <person name="Yang C.M."/>
            <person name="Sim K.G."/>
            <person name="Hentschel D.M."/>
            <person name="O'Leary E."/>
            <person name="Bonventre J.V."/>
        </authorList>
    </citation>
    <scope>NUCLEOTIDE SEQUENCE [MRNA]</scope>
    <scope>FUNCTION</scope>
    <scope>INTERACTION WITH E2F1 AND TFDP1</scope>
    <scope>DEVELOPMENTAL STAGE</scope>
    <scope>TISSUE SPECIFICITY</scope>
</reference>
<reference key="3">
    <citation type="journal article" date="2005" name="Science">
        <title>The transcriptional landscape of the mammalian genome.</title>
        <authorList>
            <person name="Carninci P."/>
            <person name="Kasukawa T."/>
            <person name="Katayama S."/>
            <person name="Gough J."/>
            <person name="Frith M.C."/>
            <person name="Maeda N."/>
            <person name="Oyama R."/>
            <person name="Ravasi T."/>
            <person name="Lenhard B."/>
            <person name="Wells C."/>
            <person name="Kodzius R."/>
            <person name="Shimokawa K."/>
            <person name="Bajic V.B."/>
            <person name="Brenner S.E."/>
            <person name="Batalov S."/>
            <person name="Forrest A.R."/>
            <person name="Zavolan M."/>
            <person name="Davis M.J."/>
            <person name="Wilming L.G."/>
            <person name="Aidinis V."/>
            <person name="Allen J.E."/>
            <person name="Ambesi-Impiombato A."/>
            <person name="Apweiler R."/>
            <person name="Aturaliya R.N."/>
            <person name="Bailey T.L."/>
            <person name="Bansal M."/>
            <person name="Baxter L."/>
            <person name="Beisel K.W."/>
            <person name="Bersano T."/>
            <person name="Bono H."/>
            <person name="Chalk A.M."/>
            <person name="Chiu K.P."/>
            <person name="Choudhary V."/>
            <person name="Christoffels A."/>
            <person name="Clutterbuck D.R."/>
            <person name="Crowe M.L."/>
            <person name="Dalla E."/>
            <person name="Dalrymple B.P."/>
            <person name="de Bono B."/>
            <person name="Della Gatta G."/>
            <person name="di Bernardo D."/>
            <person name="Down T."/>
            <person name="Engstrom P."/>
            <person name="Fagiolini M."/>
            <person name="Faulkner G."/>
            <person name="Fletcher C.F."/>
            <person name="Fukushima T."/>
            <person name="Furuno M."/>
            <person name="Futaki S."/>
            <person name="Gariboldi M."/>
            <person name="Georgii-Hemming P."/>
            <person name="Gingeras T.R."/>
            <person name="Gojobori T."/>
            <person name="Green R.E."/>
            <person name="Gustincich S."/>
            <person name="Harbers M."/>
            <person name="Hayashi Y."/>
            <person name="Hensch T.K."/>
            <person name="Hirokawa N."/>
            <person name="Hill D."/>
            <person name="Huminiecki L."/>
            <person name="Iacono M."/>
            <person name="Ikeo K."/>
            <person name="Iwama A."/>
            <person name="Ishikawa T."/>
            <person name="Jakt M."/>
            <person name="Kanapin A."/>
            <person name="Katoh M."/>
            <person name="Kawasawa Y."/>
            <person name="Kelso J."/>
            <person name="Kitamura H."/>
            <person name="Kitano H."/>
            <person name="Kollias G."/>
            <person name="Krishnan S.P."/>
            <person name="Kruger A."/>
            <person name="Kummerfeld S.K."/>
            <person name="Kurochkin I.V."/>
            <person name="Lareau L.F."/>
            <person name="Lazarevic D."/>
            <person name="Lipovich L."/>
            <person name="Liu J."/>
            <person name="Liuni S."/>
            <person name="McWilliam S."/>
            <person name="Madan Babu M."/>
            <person name="Madera M."/>
            <person name="Marchionni L."/>
            <person name="Matsuda H."/>
            <person name="Matsuzawa S."/>
            <person name="Miki H."/>
            <person name="Mignone F."/>
            <person name="Miyake S."/>
            <person name="Morris K."/>
            <person name="Mottagui-Tabar S."/>
            <person name="Mulder N."/>
            <person name="Nakano N."/>
            <person name="Nakauchi H."/>
            <person name="Ng P."/>
            <person name="Nilsson R."/>
            <person name="Nishiguchi S."/>
            <person name="Nishikawa S."/>
            <person name="Nori F."/>
            <person name="Ohara O."/>
            <person name="Okazaki Y."/>
            <person name="Orlando V."/>
            <person name="Pang K.C."/>
            <person name="Pavan W.J."/>
            <person name="Pavesi G."/>
            <person name="Pesole G."/>
            <person name="Petrovsky N."/>
            <person name="Piazza S."/>
            <person name="Reed J."/>
            <person name="Reid J.F."/>
            <person name="Ring B.Z."/>
            <person name="Ringwald M."/>
            <person name="Rost B."/>
            <person name="Ruan Y."/>
            <person name="Salzberg S.L."/>
            <person name="Sandelin A."/>
            <person name="Schneider C."/>
            <person name="Schoenbach C."/>
            <person name="Sekiguchi K."/>
            <person name="Semple C.A."/>
            <person name="Seno S."/>
            <person name="Sessa L."/>
            <person name="Sheng Y."/>
            <person name="Shibata Y."/>
            <person name="Shimada H."/>
            <person name="Shimada K."/>
            <person name="Silva D."/>
            <person name="Sinclair B."/>
            <person name="Sperling S."/>
            <person name="Stupka E."/>
            <person name="Sugiura K."/>
            <person name="Sultana R."/>
            <person name="Takenaka Y."/>
            <person name="Taki K."/>
            <person name="Tammoja K."/>
            <person name="Tan S.L."/>
            <person name="Tang S."/>
            <person name="Taylor M.S."/>
            <person name="Tegner J."/>
            <person name="Teichmann S.A."/>
            <person name="Ueda H.R."/>
            <person name="van Nimwegen E."/>
            <person name="Verardo R."/>
            <person name="Wei C.L."/>
            <person name="Yagi K."/>
            <person name="Yamanishi H."/>
            <person name="Zabarovsky E."/>
            <person name="Zhu S."/>
            <person name="Zimmer A."/>
            <person name="Hide W."/>
            <person name="Bult C."/>
            <person name="Grimmond S.M."/>
            <person name="Teasdale R.D."/>
            <person name="Liu E.T."/>
            <person name="Brusic V."/>
            <person name="Quackenbush J."/>
            <person name="Wahlestedt C."/>
            <person name="Mattick J.S."/>
            <person name="Hume D.A."/>
            <person name="Kai C."/>
            <person name="Sasaki D."/>
            <person name="Tomaru Y."/>
            <person name="Fukuda S."/>
            <person name="Kanamori-Katayama M."/>
            <person name="Suzuki M."/>
            <person name="Aoki J."/>
            <person name="Arakawa T."/>
            <person name="Iida J."/>
            <person name="Imamura K."/>
            <person name="Itoh M."/>
            <person name="Kato T."/>
            <person name="Kawaji H."/>
            <person name="Kawagashira N."/>
            <person name="Kawashima T."/>
            <person name="Kojima M."/>
            <person name="Kondo S."/>
            <person name="Konno H."/>
            <person name="Nakano K."/>
            <person name="Ninomiya N."/>
            <person name="Nishio T."/>
            <person name="Okada M."/>
            <person name="Plessy C."/>
            <person name="Shibata K."/>
            <person name="Shiraki T."/>
            <person name="Suzuki S."/>
            <person name="Tagami M."/>
            <person name="Waki K."/>
            <person name="Watahiki A."/>
            <person name="Okamura-Oho Y."/>
            <person name="Suzuki H."/>
            <person name="Kawai J."/>
            <person name="Hayashizaki Y."/>
        </authorList>
    </citation>
    <scope>NUCLEOTIDE SEQUENCE [LARGE SCALE MRNA]</scope>
    <source>
        <strain>C57BL/6J</strain>
        <tissue>Embryo</tissue>
        <tissue>Small intestine</tissue>
    </source>
</reference>
<reference key="4">
    <citation type="journal article" date="2004" name="Genome Res.">
        <title>The status, quality, and expansion of the NIH full-length cDNA project: the Mammalian Gene Collection (MGC).</title>
        <authorList>
            <consortium name="The MGC Project Team"/>
        </authorList>
    </citation>
    <scope>NUCLEOTIDE SEQUENCE [LARGE SCALE MRNA]</scope>
</reference>
<feature type="chain" id="PRO_0000191612" description="SERTA domain-containing protein 1">
    <location>
        <begin position="1"/>
        <end position="236"/>
    </location>
</feature>
<feature type="domain" description="SERTA" evidence="2">
    <location>
        <begin position="38"/>
        <end position="85"/>
    </location>
</feature>
<feature type="region of interest" description="Disordered" evidence="3">
    <location>
        <begin position="190"/>
        <end position="211"/>
    </location>
</feature>
<feature type="sequence conflict" description="In Ref. 3; BAB25588." evidence="5" ref="3">
    <original>KR</original>
    <variation>NG</variation>
    <location>
        <begin position="9"/>
        <end position="10"/>
    </location>
</feature>
<feature type="sequence conflict" description="In Ref. 2; AAK52829." evidence="5" ref="2">
    <original>E</original>
    <variation>K</variation>
    <location>
        <position position="12"/>
    </location>
</feature>
<sequence length="236" mass="25136">MLSKGLKRKREEEETMEALSVDSCWLDPSHPAVAQTPPTVASSSLFDLSVVKLHHSLRQSEPDLRHLVLVVNTLRRIQASMEPAPVLPPEPIQPPAPSVADSLLASSDAGLSASMASLLEDLNHIEDLNQAPQPQADEGPPGRSIGGISPNLGALDLLGPATGCLLDDGLEGLFEDIDTSMYDSELWLPASEGLKPGPENGPAKEEPPELDEAELDYLMDVLVGTQALERPPGPGR</sequence>
<organism>
    <name type="scientific">Mus musculus</name>
    <name type="common">Mouse</name>
    <dbReference type="NCBI Taxonomy" id="10090"/>
    <lineage>
        <taxon>Eukaryota</taxon>
        <taxon>Metazoa</taxon>
        <taxon>Chordata</taxon>
        <taxon>Craniata</taxon>
        <taxon>Vertebrata</taxon>
        <taxon>Euteleostomi</taxon>
        <taxon>Mammalia</taxon>
        <taxon>Eutheria</taxon>
        <taxon>Euarchontoglires</taxon>
        <taxon>Glires</taxon>
        <taxon>Rodentia</taxon>
        <taxon>Myomorpha</taxon>
        <taxon>Muroidea</taxon>
        <taxon>Muridae</taxon>
        <taxon>Murinae</taxon>
        <taxon>Mus</taxon>
        <taxon>Mus</taxon>
    </lineage>
</organism>
<keyword id="KW-1185">Reference proteome</keyword>
<keyword id="KW-0804">Transcription</keyword>
<keyword id="KW-0805">Transcription regulation</keyword>
<keyword id="KW-0832">Ubl conjugation</keyword>
<name>SRTD1_MOUSE</name>